<dbReference type="EC" id="2.3.1.181" evidence="1"/>
<dbReference type="EMBL" id="CP000316">
    <property type="protein sequence ID" value="ABE42279.1"/>
    <property type="molecule type" value="Genomic_DNA"/>
</dbReference>
<dbReference type="RefSeq" id="WP_011481286.1">
    <property type="nucleotide sequence ID" value="NC_007948.1"/>
</dbReference>
<dbReference type="SMR" id="Q12GR3"/>
<dbReference type="STRING" id="296591.Bpro_0314"/>
<dbReference type="KEGG" id="pol:Bpro_0314"/>
<dbReference type="eggNOG" id="COG0321">
    <property type="taxonomic scope" value="Bacteria"/>
</dbReference>
<dbReference type="HOGENOM" id="CLU_035168_3_1_4"/>
<dbReference type="OrthoDB" id="9787061at2"/>
<dbReference type="UniPathway" id="UPA00538">
    <property type="reaction ID" value="UER00592"/>
</dbReference>
<dbReference type="Proteomes" id="UP000001983">
    <property type="component" value="Chromosome"/>
</dbReference>
<dbReference type="GO" id="GO:0005737">
    <property type="term" value="C:cytoplasm"/>
    <property type="evidence" value="ECO:0007669"/>
    <property type="project" value="UniProtKB-SubCell"/>
</dbReference>
<dbReference type="GO" id="GO:0033819">
    <property type="term" value="F:lipoyl(octanoyl) transferase activity"/>
    <property type="evidence" value="ECO:0007669"/>
    <property type="project" value="UniProtKB-EC"/>
</dbReference>
<dbReference type="GO" id="GO:0036211">
    <property type="term" value="P:protein modification process"/>
    <property type="evidence" value="ECO:0007669"/>
    <property type="project" value="InterPro"/>
</dbReference>
<dbReference type="CDD" id="cd16444">
    <property type="entry name" value="LipB"/>
    <property type="match status" value="1"/>
</dbReference>
<dbReference type="Gene3D" id="3.30.930.10">
    <property type="entry name" value="Bira Bifunctional Protein, Domain 2"/>
    <property type="match status" value="1"/>
</dbReference>
<dbReference type="HAMAP" id="MF_00013">
    <property type="entry name" value="LipB"/>
    <property type="match status" value="1"/>
</dbReference>
<dbReference type="InterPro" id="IPR045864">
    <property type="entry name" value="aa-tRNA-synth_II/BPL/LPL"/>
</dbReference>
<dbReference type="InterPro" id="IPR004143">
    <property type="entry name" value="BPL_LPL_catalytic"/>
</dbReference>
<dbReference type="InterPro" id="IPR000544">
    <property type="entry name" value="Octanoyltransferase"/>
</dbReference>
<dbReference type="InterPro" id="IPR020605">
    <property type="entry name" value="Octanoyltransferase_CS"/>
</dbReference>
<dbReference type="NCBIfam" id="TIGR00214">
    <property type="entry name" value="lipB"/>
    <property type="match status" value="1"/>
</dbReference>
<dbReference type="PANTHER" id="PTHR10993:SF7">
    <property type="entry name" value="LIPOYLTRANSFERASE 2, MITOCHONDRIAL-RELATED"/>
    <property type="match status" value="1"/>
</dbReference>
<dbReference type="PANTHER" id="PTHR10993">
    <property type="entry name" value="OCTANOYLTRANSFERASE"/>
    <property type="match status" value="1"/>
</dbReference>
<dbReference type="Pfam" id="PF21948">
    <property type="entry name" value="LplA-B_cat"/>
    <property type="match status" value="1"/>
</dbReference>
<dbReference type="PIRSF" id="PIRSF016262">
    <property type="entry name" value="LPLase"/>
    <property type="match status" value="1"/>
</dbReference>
<dbReference type="SUPFAM" id="SSF55681">
    <property type="entry name" value="Class II aaRS and biotin synthetases"/>
    <property type="match status" value="1"/>
</dbReference>
<dbReference type="PROSITE" id="PS51733">
    <property type="entry name" value="BPL_LPL_CATALYTIC"/>
    <property type="match status" value="1"/>
</dbReference>
<dbReference type="PROSITE" id="PS01313">
    <property type="entry name" value="LIPB"/>
    <property type="match status" value="1"/>
</dbReference>
<gene>
    <name evidence="1" type="primary">lipB</name>
    <name type="ordered locus">Bpro_0314</name>
</gene>
<sequence length="251" mass="27125">MNMEIRHLGRVDYLPTYEAMQAFTLERTAATPNSLWICEHPPVYTQGLAGKIEHVLNPGDIPVVQTNRGGQVTYHGPGQVVAYPLIDLKQAGYYVKEYVYRIEEAVIRTLSHFGVTGHRVPGAPGIYVRLDDPFSHARLRPSPQPSPKGRGSSTPVLLPPLPGEGGGGGGPDPDPFHSLGKIAALGIKVSRHCTYHGVALNVAMDLEPFSRINPCGYAGLKTVDLRTIGVSVTWQEAADVLGQKLSSYLAP</sequence>
<comment type="function">
    <text evidence="1">Catalyzes the transfer of endogenously produced octanoic acid from octanoyl-acyl-carrier-protein onto the lipoyl domains of lipoate-dependent enzymes. Lipoyl-ACP can also act as a substrate although octanoyl-ACP is likely to be the physiological substrate.</text>
</comment>
<comment type="catalytic activity">
    <reaction evidence="1">
        <text>octanoyl-[ACP] + L-lysyl-[protein] = N(6)-octanoyl-L-lysyl-[protein] + holo-[ACP] + H(+)</text>
        <dbReference type="Rhea" id="RHEA:17665"/>
        <dbReference type="Rhea" id="RHEA-COMP:9636"/>
        <dbReference type="Rhea" id="RHEA-COMP:9685"/>
        <dbReference type="Rhea" id="RHEA-COMP:9752"/>
        <dbReference type="Rhea" id="RHEA-COMP:9928"/>
        <dbReference type="ChEBI" id="CHEBI:15378"/>
        <dbReference type="ChEBI" id="CHEBI:29969"/>
        <dbReference type="ChEBI" id="CHEBI:64479"/>
        <dbReference type="ChEBI" id="CHEBI:78463"/>
        <dbReference type="ChEBI" id="CHEBI:78809"/>
        <dbReference type="EC" id="2.3.1.181"/>
    </reaction>
</comment>
<comment type="pathway">
    <text evidence="1">Protein modification; protein lipoylation via endogenous pathway; protein N(6)-(lipoyl)lysine from octanoyl-[acyl-carrier-protein]: step 1/2.</text>
</comment>
<comment type="subcellular location">
    <subcellularLocation>
        <location evidence="1">Cytoplasm</location>
    </subcellularLocation>
</comment>
<comment type="miscellaneous">
    <text evidence="1">In the reaction, the free carboxyl group of octanoic acid is attached via an amide linkage to the epsilon-amino group of a specific lysine residue of lipoyl domains of lipoate-dependent enzymes.</text>
</comment>
<comment type="similarity">
    <text evidence="1">Belongs to the LipB family.</text>
</comment>
<reference key="1">
    <citation type="journal article" date="2008" name="Appl. Environ. Microbiol.">
        <title>The genome of Polaromonas sp. strain JS666: insights into the evolution of a hydrocarbon- and xenobiotic-degrading bacterium, and features of relevance to biotechnology.</title>
        <authorList>
            <person name="Mattes T.E."/>
            <person name="Alexander A.K."/>
            <person name="Richardson P.M."/>
            <person name="Munk A.C."/>
            <person name="Han C.S."/>
            <person name="Stothard P."/>
            <person name="Coleman N.V."/>
        </authorList>
    </citation>
    <scope>NUCLEOTIDE SEQUENCE [LARGE SCALE GENOMIC DNA]</scope>
    <source>
        <strain>JS666 / ATCC BAA-500</strain>
    </source>
</reference>
<feature type="chain" id="PRO_0000321658" description="Octanoyltransferase">
    <location>
        <begin position="1"/>
        <end position="251"/>
    </location>
</feature>
<feature type="domain" description="BPL/LPL catalytic" evidence="2">
    <location>
        <begin position="29"/>
        <end position="251"/>
    </location>
</feature>
<feature type="region of interest" description="Disordered" evidence="3">
    <location>
        <begin position="137"/>
        <end position="174"/>
    </location>
</feature>
<feature type="active site" description="Acyl-thioester intermediate" evidence="1">
    <location>
        <position position="215"/>
    </location>
</feature>
<feature type="binding site" evidence="1">
    <location>
        <begin position="68"/>
        <end position="75"/>
    </location>
    <ligand>
        <name>substrate</name>
    </ligand>
</feature>
<feature type="binding site" evidence="1">
    <location>
        <begin position="184"/>
        <end position="186"/>
    </location>
    <ligand>
        <name>substrate</name>
    </ligand>
</feature>
<feature type="binding site" evidence="1">
    <location>
        <begin position="197"/>
        <end position="199"/>
    </location>
    <ligand>
        <name>substrate</name>
    </ligand>
</feature>
<feature type="site" description="Lowers pKa of active site Cys" evidence="1">
    <location>
        <position position="181"/>
    </location>
</feature>
<organism>
    <name type="scientific">Polaromonas sp. (strain JS666 / ATCC BAA-500)</name>
    <dbReference type="NCBI Taxonomy" id="296591"/>
    <lineage>
        <taxon>Bacteria</taxon>
        <taxon>Pseudomonadati</taxon>
        <taxon>Pseudomonadota</taxon>
        <taxon>Betaproteobacteria</taxon>
        <taxon>Burkholderiales</taxon>
        <taxon>Comamonadaceae</taxon>
        <taxon>Polaromonas</taxon>
    </lineage>
</organism>
<accession>Q12GR3</accession>
<keyword id="KW-0012">Acyltransferase</keyword>
<keyword id="KW-0963">Cytoplasm</keyword>
<keyword id="KW-1185">Reference proteome</keyword>
<keyword id="KW-0808">Transferase</keyword>
<protein>
    <recommendedName>
        <fullName evidence="1">Octanoyltransferase</fullName>
        <ecNumber evidence="1">2.3.1.181</ecNumber>
    </recommendedName>
    <alternativeName>
        <fullName evidence="1">Lipoate-protein ligase B</fullName>
    </alternativeName>
    <alternativeName>
        <fullName evidence="1">Lipoyl/octanoyl transferase</fullName>
    </alternativeName>
    <alternativeName>
        <fullName evidence="1">Octanoyl-[acyl-carrier-protein]-protein N-octanoyltransferase</fullName>
    </alternativeName>
</protein>
<proteinExistence type="inferred from homology"/>
<name>LIPB_POLSJ</name>
<evidence type="ECO:0000255" key="1">
    <source>
        <dbReference type="HAMAP-Rule" id="MF_00013"/>
    </source>
</evidence>
<evidence type="ECO:0000255" key="2">
    <source>
        <dbReference type="PROSITE-ProRule" id="PRU01067"/>
    </source>
</evidence>
<evidence type="ECO:0000256" key="3">
    <source>
        <dbReference type="SAM" id="MobiDB-lite"/>
    </source>
</evidence>